<name>ISPH_ACIB5</name>
<evidence type="ECO:0000255" key="1">
    <source>
        <dbReference type="HAMAP-Rule" id="MF_00191"/>
    </source>
</evidence>
<dbReference type="EC" id="1.17.7.4" evidence="1"/>
<dbReference type="EMBL" id="CP001182">
    <property type="protein sequence ID" value="ACJ42987.1"/>
    <property type="molecule type" value="Genomic_DNA"/>
</dbReference>
<dbReference type="RefSeq" id="WP_000407064.1">
    <property type="nucleotide sequence ID" value="NC_011586.2"/>
</dbReference>
<dbReference type="SMR" id="B7IAU0"/>
<dbReference type="GeneID" id="92895407"/>
<dbReference type="KEGG" id="abn:AB57_3626"/>
<dbReference type="HOGENOM" id="CLU_027486_1_0_6"/>
<dbReference type="UniPathway" id="UPA00056">
    <property type="reaction ID" value="UER00097"/>
</dbReference>
<dbReference type="UniPathway" id="UPA00059">
    <property type="reaction ID" value="UER00105"/>
</dbReference>
<dbReference type="Proteomes" id="UP000007094">
    <property type="component" value="Chromosome"/>
</dbReference>
<dbReference type="GO" id="GO:0051539">
    <property type="term" value="F:4 iron, 4 sulfur cluster binding"/>
    <property type="evidence" value="ECO:0007669"/>
    <property type="project" value="UniProtKB-UniRule"/>
</dbReference>
<dbReference type="GO" id="GO:0051745">
    <property type="term" value="F:4-hydroxy-3-methylbut-2-enyl diphosphate reductase activity"/>
    <property type="evidence" value="ECO:0007669"/>
    <property type="project" value="UniProtKB-UniRule"/>
</dbReference>
<dbReference type="GO" id="GO:0046872">
    <property type="term" value="F:metal ion binding"/>
    <property type="evidence" value="ECO:0007669"/>
    <property type="project" value="UniProtKB-KW"/>
</dbReference>
<dbReference type="GO" id="GO:0050992">
    <property type="term" value="P:dimethylallyl diphosphate biosynthetic process"/>
    <property type="evidence" value="ECO:0007669"/>
    <property type="project" value="UniProtKB-UniRule"/>
</dbReference>
<dbReference type="GO" id="GO:0019288">
    <property type="term" value="P:isopentenyl diphosphate biosynthetic process, methylerythritol 4-phosphate pathway"/>
    <property type="evidence" value="ECO:0007669"/>
    <property type="project" value="UniProtKB-UniRule"/>
</dbReference>
<dbReference type="GO" id="GO:0016114">
    <property type="term" value="P:terpenoid biosynthetic process"/>
    <property type="evidence" value="ECO:0007669"/>
    <property type="project" value="UniProtKB-UniRule"/>
</dbReference>
<dbReference type="CDD" id="cd13944">
    <property type="entry name" value="lytB_ispH"/>
    <property type="match status" value="1"/>
</dbReference>
<dbReference type="Gene3D" id="3.40.50.11270">
    <property type="match status" value="1"/>
</dbReference>
<dbReference type="Gene3D" id="3.40.1010.20">
    <property type="entry name" value="4-hydroxy-3-methylbut-2-enyl diphosphate reductase, catalytic domain"/>
    <property type="match status" value="2"/>
</dbReference>
<dbReference type="HAMAP" id="MF_00191">
    <property type="entry name" value="IspH"/>
    <property type="match status" value="1"/>
</dbReference>
<dbReference type="InterPro" id="IPR003451">
    <property type="entry name" value="LytB/IspH"/>
</dbReference>
<dbReference type="NCBIfam" id="TIGR00216">
    <property type="entry name" value="ispH_lytB"/>
    <property type="match status" value="1"/>
</dbReference>
<dbReference type="NCBIfam" id="NF002188">
    <property type="entry name" value="PRK01045.1-2"/>
    <property type="match status" value="1"/>
</dbReference>
<dbReference type="NCBIfam" id="NF002190">
    <property type="entry name" value="PRK01045.1-4"/>
    <property type="match status" value="1"/>
</dbReference>
<dbReference type="PANTHER" id="PTHR30426">
    <property type="entry name" value="4-HYDROXY-3-METHYLBUT-2-ENYL DIPHOSPHATE REDUCTASE"/>
    <property type="match status" value="1"/>
</dbReference>
<dbReference type="PANTHER" id="PTHR30426:SF0">
    <property type="entry name" value="4-HYDROXY-3-METHYLBUT-2-ENYL DIPHOSPHATE REDUCTASE"/>
    <property type="match status" value="1"/>
</dbReference>
<dbReference type="Pfam" id="PF02401">
    <property type="entry name" value="LYTB"/>
    <property type="match status" value="1"/>
</dbReference>
<sequence>MEIVLANPRGFCAGVDRAIAIVNRALECFNPPIYVRHEVVHNKFVVDDLRQRGAVFVDELDQVPDDSIVIFSAHGVSKAVQQEAERRGLKVFDATCPLVTKVHIEVTKYAREGTEAILIGHEGHPEVEGTMGQYDKLKGGDIYLVEDEADVAALEVRHPEKLAFVTQTTLSIDDTAKVIDALRAKFPNIQGPRKDDICYATQNRQDAVRDLAEKCDVVLVVGSPNSSNSNRLRELAERMGKAAYLVDNADQLEQSWFNDTCKIGVTAGASAPEILIKQVIQRLQDWGAQAPKELEGREENITFSLPKELRIHVTQA</sequence>
<accession>B7IAU0</accession>
<reference key="1">
    <citation type="journal article" date="2008" name="J. Bacteriol.">
        <title>Comparative genome sequence analysis of multidrug-resistant Acinetobacter baumannii.</title>
        <authorList>
            <person name="Adams M.D."/>
            <person name="Goglin K."/>
            <person name="Molyneaux N."/>
            <person name="Hujer K.M."/>
            <person name="Lavender H."/>
            <person name="Jamison J.J."/>
            <person name="MacDonald I.J."/>
            <person name="Martin K.M."/>
            <person name="Russo T."/>
            <person name="Campagnari A.A."/>
            <person name="Hujer A.M."/>
            <person name="Bonomo R.A."/>
            <person name="Gill S.R."/>
        </authorList>
    </citation>
    <scope>NUCLEOTIDE SEQUENCE [LARGE SCALE GENOMIC DNA]</scope>
    <source>
        <strain>AB0057</strain>
    </source>
</reference>
<feature type="chain" id="PRO_1000118595" description="4-hydroxy-3-methylbut-2-enyl diphosphate reductase">
    <location>
        <begin position="1"/>
        <end position="316"/>
    </location>
</feature>
<feature type="active site" description="Proton donor" evidence="1">
    <location>
        <position position="126"/>
    </location>
</feature>
<feature type="binding site" evidence="1">
    <location>
        <position position="12"/>
    </location>
    <ligand>
        <name>[4Fe-4S] cluster</name>
        <dbReference type="ChEBI" id="CHEBI:49883"/>
    </ligand>
</feature>
<feature type="binding site" evidence="1">
    <location>
        <position position="41"/>
    </location>
    <ligand>
        <name>(2E)-4-hydroxy-3-methylbut-2-enyl diphosphate</name>
        <dbReference type="ChEBI" id="CHEBI:128753"/>
    </ligand>
</feature>
<feature type="binding site" evidence="1">
    <location>
        <position position="41"/>
    </location>
    <ligand>
        <name>dimethylallyl diphosphate</name>
        <dbReference type="ChEBI" id="CHEBI:57623"/>
    </ligand>
</feature>
<feature type="binding site" evidence="1">
    <location>
        <position position="41"/>
    </location>
    <ligand>
        <name>isopentenyl diphosphate</name>
        <dbReference type="ChEBI" id="CHEBI:128769"/>
    </ligand>
</feature>
<feature type="binding site" evidence="1">
    <location>
        <position position="74"/>
    </location>
    <ligand>
        <name>(2E)-4-hydroxy-3-methylbut-2-enyl diphosphate</name>
        <dbReference type="ChEBI" id="CHEBI:128753"/>
    </ligand>
</feature>
<feature type="binding site" evidence="1">
    <location>
        <position position="74"/>
    </location>
    <ligand>
        <name>dimethylallyl diphosphate</name>
        <dbReference type="ChEBI" id="CHEBI:57623"/>
    </ligand>
</feature>
<feature type="binding site" evidence="1">
    <location>
        <position position="74"/>
    </location>
    <ligand>
        <name>isopentenyl diphosphate</name>
        <dbReference type="ChEBI" id="CHEBI:128769"/>
    </ligand>
</feature>
<feature type="binding site" evidence="1">
    <location>
        <position position="96"/>
    </location>
    <ligand>
        <name>[4Fe-4S] cluster</name>
        <dbReference type="ChEBI" id="CHEBI:49883"/>
    </ligand>
</feature>
<feature type="binding site" evidence="1">
    <location>
        <position position="124"/>
    </location>
    <ligand>
        <name>(2E)-4-hydroxy-3-methylbut-2-enyl diphosphate</name>
        <dbReference type="ChEBI" id="CHEBI:128753"/>
    </ligand>
</feature>
<feature type="binding site" evidence="1">
    <location>
        <position position="124"/>
    </location>
    <ligand>
        <name>dimethylallyl diphosphate</name>
        <dbReference type="ChEBI" id="CHEBI:57623"/>
    </ligand>
</feature>
<feature type="binding site" evidence="1">
    <location>
        <position position="124"/>
    </location>
    <ligand>
        <name>isopentenyl diphosphate</name>
        <dbReference type="ChEBI" id="CHEBI:128769"/>
    </ligand>
</feature>
<feature type="binding site" evidence="1">
    <location>
        <position position="168"/>
    </location>
    <ligand>
        <name>(2E)-4-hydroxy-3-methylbut-2-enyl diphosphate</name>
        <dbReference type="ChEBI" id="CHEBI:128753"/>
    </ligand>
</feature>
<feature type="binding site" evidence="1">
    <location>
        <position position="198"/>
    </location>
    <ligand>
        <name>[4Fe-4S] cluster</name>
        <dbReference type="ChEBI" id="CHEBI:49883"/>
    </ligand>
</feature>
<feature type="binding site" evidence="1">
    <location>
        <position position="226"/>
    </location>
    <ligand>
        <name>(2E)-4-hydroxy-3-methylbut-2-enyl diphosphate</name>
        <dbReference type="ChEBI" id="CHEBI:128753"/>
    </ligand>
</feature>
<feature type="binding site" evidence="1">
    <location>
        <position position="226"/>
    </location>
    <ligand>
        <name>dimethylallyl diphosphate</name>
        <dbReference type="ChEBI" id="CHEBI:57623"/>
    </ligand>
</feature>
<feature type="binding site" evidence="1">
    <location>
        <position position="226"/>
    </location>
    <ligand>
        <name>isopentenyl diphosphate</name>
        <dbReference type="ChEBI" id="CHEBI:128769"/>
    </ligand>
</feature>
<feature type="binding site" evidence="1">
    <location>
        <position position="227"/>
    </location>
    <ligand>
        <name>(2E)-4-hydroxy-3-methylbut-2-enyl diphosphate</name>
        <dbReference type="ChEBI" id="CHEBI:128753"/>
    </ligand>
</feature>
<feature type="binding site" evidence="1">
    <location>
        <position position="227"/>
    </location>
    <ligand>
        <name>dimethylallyl diphosphate</name>
        <dbReference type="ChEBI" id="CHEBI:57623"/>
    </ligand>
</feature>
<feature type="binding site" evidence="1">
    <location>
        <position position="227"/>
    </location>
    <ligand>
        <name>isopentenyl diphosphate</name>
        <dbReference type="ChEBI" id="CHEBI:128769"/>
    </ligand>
</feature>
<feature type="binding site" evidence="1">
    <location>
        <position position="228"/>
    </location>
    <ligand>
        <name>(2E)-4-hydroxy-3-methylbut-2-enyl diphosphate</name>
        <dbReference type="ChEBI" id="CHEBI:128753"/>
    </ligand>
</feature>
<feature type="binding site" evidence="1">
    <location>
        <position position="228"/>
    </location>
    <ligand>
        <name>dimethylallyl diphosphate</name>
        <dbReference type="ChEBI" id="CHEBI:57623"/>
    </ligand>
</feature>
<feature type="binding site" evidence="1">
    <location>
        <position position="228"/>
    </location>
    <ligand>
        <name>isopentenyl diphosphate</name>
        <dbReference type="ChEBI" id="CHEBI:128769"/>
    </ligand>
</feature>
<feature type="binding site" evidence="1">
    <location>
        <position position="270"/>
    </location>
    <ligand>
        <name>(2E)-4-hydroxy-3-methylbut-2-enyl diphosphate</name>
        <dbReference type="ChEBI" id="CHEBI:128753"/>
    </ligand>
</feature>
<feature type="binding site" evidence="1">
    <location>
        <position position="270"/>
    </location>
    <ligand>
        <name>dimethylallyl diphosphate</name>
        <dbReference type="ChEBI" id="CHEBI:57623"/>
    </ligand>
</feature>
<feature type="binding site" evidence="1">
    <location>
        <position position="270"/>
    </location>
    <ligand>
        <name>isopentenyl diphosphate</name>
        <dbReference type="ChEBI" id="CHEBI:128769"/>
    </ligand>
</feature>
<organism>
    <name type="scientific">Acinetobacter baumannii (strain AB0057)</name>
    <dbReference type="NCBI Taxonomy" id="480119"/>
    <lineage>
        <taxon>Bacteria</taxon>
        <taxon>Pseudomonadati</taxon>
        <taxon>Pseudomonadota</taxon>
        <taxon>Gammaproteobacteria</taxon>
        <taxon>Moraxellales</taxon>
        <taxon>Moraxellaceae</taxon>
        <taxon>Acinetobacter</taxon>
        <taxon>Acinetobacter calcoaceticus/baumannii complex</taxon>
    </lineage>
</organism>
<protein>
    <recommendedName>
        <fullName evidence="1">4-hydroxy-3-methylbut-2-enyl diphosphate reductase</fullName>
        <shortName evidence="1">HMBPP reductase</shortName>
        <ecNumber evidence="1">1.17.7.4</ecNumber>
    </recommendedName>
</protein>
<keyword id="KW-0004">4Fe-4S</keyword>
<keyword id="KW-0408">Iron</keyword>
<keyword id="KW-0411">Iron-sulfur</keyword>
<keyword id="KW-0414">Isoprene biosynthesis</keyword>
<keyword id="KW-0479">Metal-binding</keyword>
<keyword id="KW-0560">Oxidoreductase</keyword>
<comment type="function">
    <text evidence="1">Catalyzes the conversion of 1-hydroxy-2-methyl-2-(E)-butenyl 4-diphosphate (HMBPP) into a mixture of isopentenyl diphosphate (IPP) and dimethylallyl diphosphate (DMAPP). Acts in the terminal step of the DOXP/MEP pathway for isoprenoid precursor biosynthesis.</text>
</comment>
<comment type="catalytic activity">
    <reaction evidence="1">
        <text>isopentenyl diphosphate + 2 oxidized [2Fe-2S]-[ferredoxin] + H2O = (2E)-4-hydroxy-3-methylbut-2-enyl diphosphate + 2 reduced [2Fe-2S]-[ferredoxin] + 2 H(+)</text>
        <dbReference type="Rhea" id="RHEA:24488"/>
        <dbReference type="Rhea" id="RHEA-COMP:10000"/>
        <dbReference type="Rhea" id="RHEA-COMP:10001"/>
        <dbReference type="ChEBI" id="CHEBI:15377"/>
        <dbReference type="ChEBI" id="CHEBI:15378"/>
        <dbReference type="ChEBI" id="CHEBI:33737"/>
        <dbReference type="ChEBI" id="CHEBI:33738"/>
        <dbReference type="ChEBI" id="CHEBI:128753"/>
        <dbReference type="ChEBI" id="CHEBI:128769"/>
        <dbReference type="EC" id="1.17.7.4"/>
    </reaction>
</comment>
<comment type="catalytic activity">
    <reaction evidence="1">
        <text>dimethylallyl diphosphate + 2 oxidized [2Fe-2S]-[ferredoxin] + H2O = (2E)-4-hydroxy-3-methylbut-2-enyl diphosphate + 2 reduced [2Fe-2S]-[ferredoxin] + 2 H(+)</text>
        <dbReference type="Rhea" id="RHEA:24825"/>
        <dbReference type="Rhea" id="RHEA-COMP:10000"/>
        <dbReference type="Rhea" id="RHEA-COMP:10001"/>
        <dbReference type="ChEBI" id="CHEBI:15377"/>
        <dbReference type="ChEBI" id="CHEBI:15378"/>
        <dbReference type="ChEBI" id="CHEBI:33737"/>
        <dbReference type="ChEBI" id="CHEBI:33738"/>
        <dbReference type="ChEBI" id="CHEBI:57623"/>
        <dbReference type="ChEBI" id="CHEBI:128753"/>
        <dbReference type="EC" id="1.17.7.4"/>
    </reaction>
</comment>
<comment type="cofactor">
    <cofactor evidence="1">
        <name>[4Fe-4S] cluster</name>
        <dbReference type="ChEBI" id="CHEBI:49883"/>
    </cofactor>
    <text evidence="1">Binds 1 [4Fe-4S] cluster per subunit.</text>
</comment>
<comment type="pathway">
    <text evidence="1">Isoprenoid biosynthesis; dimethylallyl diphosphate biosynthesis; dimethylallyl diphosphate from (2E)-4-hydroxy-3-methylbutenyl diphosphate: step 1/1.</text>
</comment>
<comment type="pathway">
    <text evidence="1">Isoprenoid biosynthesis; isopentenyl diphosphate biosynthesis via DXP pathway; isopentenyl diphosphate from 1-deoxy-D-xylulose 5-phosphate: step 6/6.</text>
</comment>
<comment type="similarity">
    <text evidence="1">Belongs to the IspH family.</text>
</comment>
<gene>
    <name evidence="1" type="primary">ispH</name>
    <name type="ordered locus">AB57_3626</name>
</gene>
<proteinExistence type="inferred from homology"/>